<accession>A2VE14</accession>
<reference key="1">
    <citation type="submission" date="2007-02" db="EMBL/GenBank/DDBJ databases">
        <authorList>
            <consortium name="NIH - Mammalian Gene Collection (MGC) project"/>
        </authorList>
    </citation>
    <scope>NUCLEOTIDE SEQUENCE [LARGE SCALE MRNA]</scope>
    <source>
        <strain>Hereford</strain>
        <tissue>Hippocampus</tissue>
    </source>
</reference>
<gene>
    <name type="primary">SAE1</name>
</gene>
<organism>
    <name type="scientific">Bos taurus</name>
    <name type="common">Bovine</name>
    <dbReference type="NCBI Taxonomy" id="9913"/>
    <lineage>
        <taxon>Eukaryota</taxon>
        <taxon>Metazoa</taxon>
        <taxon>Chordata</taxon>
        <taxon>Craniata</taxon>
        <taxon>Vertebrata</taxon>
        <taxon>Euteleostomi</taxon>
        <taxon>Mammalia</taxon>
        <taxon>Eutheria</taxon>
        <taxon>Laurasiatheria</taxon>
        <taxon>Artiodactyla</taxon>
        <taxon>Ruminantia</taxon>
        <taxon>Pecora</taxon>
        <taxon>Bovidae</taxon>
        <taxon>Bovinae</taxon>
        <taxon>Bos</taxon>
    </lineage>
</organism>
<proteinExistence type="evidence at transcript level"/>
<keyword id="KW-0007">Acetylation</keyword>
<keyword id="KW-0436">Ligase</keyword>
<keyword id="KW-0539">Nucleus</keyword>
<keyword id="KW-0597">Phosphoprotein</keyword>
<keyword id="KW-1185">Reference proteome</keyword>
<keyword id="KW-0833">Ubl conjugation pathway</keyword>
<evidence type="ECO:0000250" key="1"/>
<evidence type="ECO:0000250" key="2">
    <source>
        <dbReference type="UniProtKB" id="Q9R1T2"/>
    </source>
</evidence>
<evidence type="ECO:0000250" key="3">
    <source>
        <dbReference type="UniProtKB" id="Q9UBE0"/>
    </source>
</evidence>
<evidence type="ECO:0000305" key="4"/>
<dbReference type="EMBL" id="BC133519">
    <property type="protein sequence ID" value="AAI33520.1"/>
    <property type="molecule type" value="mRNA"/>
</dbReference>
<dbReference type="RefSeq" id="NP_001075180.1">
    <property type="nucleotide sequence ID" value="NM_001081711.1"/>
</dbReference>
<dbReference type="SMR" id="A2VE14"/>
<dbReference type="FunCoup" id="A2VE14">
    <property type="interactions" value="5252"/>
</dbReference>
<dbReference type="STRING" id="9913.ENSBTAP00000062557"/>
<dbReference type="PaxDb" id="9913-ENSBTAP00000003467"/>
<dbReference type="PeptideAtlas" id="A2VE14"/>
<dbReference type="Ensembl" id="ENSBTAT00000003467.6">
    <property type="protein sequence ID" value="ENSBTAP00000003467.4"/>
    <property type="gene ID" value="ENSBTAG00000002676.6"/>
</dbReference>
<dbReference type="GeneID" id="505512"/>
<dbReference type="KEGG" id="bta:505512"/>
<dbReference type="CTD" id="10055"/>
<dbReference type="VEuPathDB" id="HostDB:ENSBTAG00000002676"/>
<dbReference type="VGNC" id="VGNC:34261">
    <property type="gene designation" value="SAE1"/>
</dbReference>
<dbReference type="eggNOG" id="KOG2014">
    <property type="taxonomic scope" value="Eukaryota"/>
</dbReference>
<dbReference type="GeneTree" id="ENSGT00550000075007"/>
<dbReference type="HOGENOM" id="CLU_002556_4_0_1"/>
<dbReference type="InParanoid" id="A2VE14"/>
<dbReference type="OMA" id="EFFGQFD"/>
<dbReference type="OrthoDB" id="412647at2759"/>
<dbReference type="TreeFam" id="TF315037"/>
<dbReference type="Reactome" id="R-BTA-3065676">
    <property type="pathway name" value="SUMO is conjugated to E1 (UBA2:SAE1)"/>
</dbReference>
<dbReference type="Reactome" id="R-BTA-3065678">
    <property type="pathway name" value="SUMO is transferred from E1 to E2 (UBE2I, UBC9)"/>
</dbReference>
<dbReference type="UniPathway" id="UPA00886"/>
<dbReference type="Proteomes" id="UP000009136">
    <property type="component" value="Chromosome 18"/>
</dbReference>
<dbReference type="Bgee" id="ENSBTAG00000002676">
    <property type="expression patterns" value="Expressed in spermatocyte and 105 other cell types or tissues"/>
</dbReference>
<dbReference type="GO" id="GO:0005737">
    <property type="term" value="C:cytoplasm"/>
    <property type="evidence" value="ECO:0000318"/>
    <property type="project" value="GO_Central"/>
</dbReference>
<dbReference type="GO" id="GO:0031510">
    <property type="term" value="C:SUMO activating enzyme complex"/>
    <property type="evidence" value="ECO:0000250"/>
    <property type="project" value="UniProtKB"/>
</dbReference>
<dbReference type="GO" id="GO:0019948">
    <property type="term" value="F:SUMO activating enzyme activity"/>
    <property type="evidence" value="ECO:0000318"/>
    <property type="project" value="GO_Central"/>
</dbReference>
<dbReference type="GO" id="GO:0016925">
    <property type="term" value="P:protein sumoylation"/>
    <property type="evidence" value="ECO:0000250"/>
    <property type="project" value="UniProtKB"/>
</dbReference>
<dbReference type="CDD" id="cd01492">
    <property type="entry name" value="Aos1_SUMO"/>
    <property type="match status" value="1"/>
</dbReference>
<dbReference type="FunFam" id="3.40.50.720:FF:000274">
    <property type="entry name" value="SUMO-activating enzyme subunit 1 isoform X1"/>
    <property type="match status" value="1"/>
</dbReference>
<dbReference type="Gene3D" id="3.40.50.720">
    <property type="entry name" value="NAD(P)-binding Rossmann-like Domain"/>
    <property type="match status" value="1"/>
</dbReference>
<dbReference type="InterPro" id="IPR045886">
    <property type="entry name" value="ThiF/MoeB/HesA"/>
</dbReference>
<dbReference type="InterPro" id="IPR000594">
    <property type="entry name" value="ThiF_NAD_FAD-bd"/>
</dbReference>
<dbReference type="InterPro" id="IPR035985">
    <property type="entry name" value="Ubiquitin-activating_enz"/>
</dbReference>
<dbReference type="InterPro" id="IPR000011">
    <property type="entry name" value="UBQ/SUMO-activ_enz_E1-like"/>
</dbReference>
<dbReference type="PANTHER" id="PTHR10953:SF162">
    <property type="entry name" value="SUMO-ACTIVATING ENZYME SUBUNIT 1"/>
    <property type="match status" value="1"/>
</dbReference>
<dbReference type="PANTHER" id="PTHR10953">
    <property type="entry name" value="UBIQUITIN-ACTIVATING ENZYME E1"/>
    <property type="match status" value="1"/>
</dbReference>
<dbReference type="Pfam" id="PF00899">
    <property type="entry name" value="ThiF"/>
    <property type="match status" value="1"/>
</dbReference>
<dbReference type="PRINTS" id="PR01849">
    <property type="entry name" value="UBIQUITINACT"/>
</dbReference>
<dbReference type="SUPFAM" id="SSF69572">
    <property type="entry name" value="Activating enzymes of the ubiquitin-like proteins"/>
    <property type="match status" value="1"/>
</dbReference>
<name>SAE1_BOVIN</name>
<comment type="function">
    <text evidence="1">The heterodimer acts as an E1 ligase for SUMO1, SUMO2, SUMO3, and probably SUMO4. It mediates ATP-dependent activation of SUMO proteins followed by formation of a thioester bond between a SUMO protein and a conserved active site cysteine residue on UBA2/SAE2 (By similarity).</text>
</comment>
<comment type="pathway">
    <text>Protein modification; protein sumoylation.</text>
</comment>
<comment type="subunit">
    <text evidence="1">Heterodimer of SAE1 and UBA2/SAE2. The heterodimer corresponds to the two domains that are encoded on a single polypeptide chain in ubiquitin-activating enzyme E1. Interacts with UBE2I (By similarity).</text>
</comment>
<comment type="subcellular location">
    <subcellularLocation>
        <location evidence="1">Nucleus</location>
    </subcellularLocation>
</comment>
<comment type="similarity">
    <text evidence="4">Belongs to the ubiquitin-activating E1 family.</text>
</comment>
<sequence>MVEKEEAGGGISEEEAAQYDRQIRLWGLEAQKRLRASQVLLVGMKGLGAEIAKNLILAGVKGLTMLDHEQVSPEDPGAQFLIRTGSVGRNRAEASLERAQNLNPMVDVKVDTENIEKKPESFFTQFDAVCLTCCSRDVIVKVDQICHKNSIKFFTGDVFGYHGYTFANLGEHEFVEEKTKVAKVSQGVEDGPDTKRAKLDSSETTMVKKKVVFCSVKEALEVDWSSDKAKAALKRTTPDYFLLQVLLKFRTDKGRDPSSDTFGEDSELLLQIRNDVLDALGVNPDLLPEDFVRYCFSEMAPVCAVVGGILAQEIVKALSQRDPPHNNFFFFDGMKGNGIVECLGPN</sequence>
<protein>
    <recommendedName>
        <fullName>SUMO-activating enzyme subunit 1</fullName>
    </recommendedName>
    <alternativeName>
        <fullName>Ubiquitin-like 1-activating enzyme E1A</fullName>
    </alternativeName>
    <component>
        <recommendedName>
            <fullName>SUMO-activating enzyme subunit 1, N-terminally processed</fullName>
        </recommendedName>
    </component>
</protein>
<feature type="chain" id="PRO_0000423289" description="SUMO-activating enzyme subunit 1">
    <location>
        <begin position="1"/>
        <end position="346"/>
    </location>
</feature>
<feature type="initiator methionine" description="Removed; alternate" evidence="3">
    <location>
        <position position="1"/>
    </location>
</feature>
<feature type="chain" id="PRO_0000328137" description="SUMO-activating enzyme subunit 1, N-terminally processed">
    <location>
        <begin position="2"/>
        <end position="346"/>
    </location>
</feature>
<feature type="modified residue" description="N-acetylmethionine" evidence="3">
    <location>
        <position position="1"/>
    </location>
</feature>
<feature type="modified residue" description="N-acetylvaline; in SUMO-activating enzyme subunit 1, N-terminally processed" evidence="3">
    <location>
        <position position="2"/>
    </location>
</feature>
<feature type="modified residue" description="Phosphoserine" evidence="3">
    <location>
        <position position="12"/>
    </location>
</feature>
<feature type="modified residue" description="N6-acetyllysine" evidence="2">
    <location>
        <position position="198"/>
    </location>
</feature>